<dbReference type="EC" id="1.11.1.21" evidence="1"/>
<dbReference type="EMBL" id="CP000480">
    <property type="protein sequence ID" value="ABK74103.1"/>
    <property type="status" value="ALT_INIT"/>
    <property type="molecule type" value="Genomic_DNA"/>
</dbReference>
<dbReference type="EMBL" id="CP001663">
    <property type="protein sequence ID" value="AFP40103.1"/>
    <property type="status" value="ALT_INIT"/>
    <property type="molecule type" value="Genomic_DNA"/>
</dbReference>
<dbReference type="RefSeq" id="YP_888029.1">
    <property type="nucleotide sequence ID" value="NC_008596.1"/>
</dbReference>
<dbReference type="SMR" id="A0QYP1"/>
<dbReference type="STRING" id="246196.MSMEG_3729"/>
<dbReference type="PaxDb" id="246196-MSMEI_3640"/>
<dbReference type="KEGG" id="msg:MSMEI_3640"/>
<dbReference type="KEGG" id="msm:MSMEG_3729"/>
<dbReference type="PATRIC" id="fig|246196.19.peg.3673"/>
<dbReference type="eggNOG" id="COG0376">
    <property type="taxonomic scope" value="Bacteria"/>
</dbReference>
<dbReference type="OrthoDB" id="9759743at2"/>
<dbReference type="Proteomes" id="UP000000757">
    <property type="component" value="Chromosome"/>
</dbReference>
<dbReference type="Proteomes" id="UP000006158">
    <property type="component" value="Chromosome"/>
</dbReference>
<dbReference type="GO" id="GO:0005829">
    <property type="term" value="C:cytosol"/>
    <property type="evidence" value="ECO:0007669"/>
    <property type="project" value="TreeGrafter"/>
</dbReference>
<dbReference type="GO" id="GO:0004096">
    <property type="term" value="F:catalase activity"/>
    <property type="evidence" value="ECO:0007669"/>
    <property type="project" value="UniProtKB-UniRule"/>
</dbReference>
<dbReference type="GO" id="GO:0020037">
    <property type="term" value="F:heme binding"/>
    <property type="evidence" value="ECO:0007669"/>
    <property type="project" value="InterPro"/>
</dbReference>
<dbReference type="GO" id="GO:0046872">
    <property type="term" value="F:metal ion binding"/>
    <property type="evidence" value="ECO:0007669"/>
    <property type="project" value="UniProtKB-KW"/>
</dbReference>
<dbReference type="GO" id="GO:0070301">
    <property type="term" value="P:cellular response to hydrogen peroxide"/>
    <property type="evidence" value="ECO:0007669"/>
    <property type="project" value="TreeGrafter"/>
</dbReference>
<dbReference type="GO" id="GO:0042744">
    <property type="term" value="P:hydrogen peroxide catabolic process"/>
    <property type="evidence" value="ECO:0007669"/>
    <property type="project" value="UniProtKB-KW"/>
</dbReference>
<dbReference type="CDD" id="cd08200">
    <property type="entry name" value="catalase_peroxidase_2"/>
    <property type="match status" value="1"/>
</dbReference>
<dbReference type="FunFam" id="1.10.420.10:FF:000004">
    <property type="entry name" value="Catalase-peroxidase"/>
    <property type="match status" value="1"/>
</dbReference>
<dbReference type="Gene3D" id="1.10.520.10">
    <property type="match status" value="2"/>
</dbReference>
<dbReference type="Gene3D" id="1.10.420.10">
    <property type="entry name" value="Peroxidase, domain 2"/>
    <property type="match status" value="2"/>
</dbReference>
<dbReference type="HAMAP" id="MF_01961">
    <property type="entry name" value="Catal_peroxid"/>
    <property type="match status" value="1"/>
</dbReference>
<dbReference type="InterPro" id="IPR000763">
    <property type="entry name" value="Catalase_peroxidase"/>
</dbReference>
<dbReference type="InterPro" id="IPR002016">
    <property type="entry name" value="Haem_peroxidase"/>
</dbReference>
<dbReference type="InterPro" id="IPR010255">
    <property type="entry name" value="Haem_peroxidase_sf"/>
</dbReference>
<dbReference type="InterPro" id="IPR019794">
    <property type="entry name" value="Peroxidases_AS"/>
</dbReference>
<dbReference type="InterPro" id="IPR019793">
    <property type="entry name" value="Peroxidases_heam-ligand_BS"/>
</dbReference>
<dbReference type="NCBIfam" id="TIGR00198">
    <property type="entry name" value="cat_per_HPI"/>
    <property type="match status" value="1"/>
</dbReference>
<dbReference type="NCBIfam" id="NF011635">
    <property type="entry name" value="PRK15061.1"/>
    <property type="match status" value="1"/>
</dbReference>
<dbReference type="PANTHER" id="PTHR30555:SF0">
    <property type="entry name" value="CATALASE-PEROXIDASE"/>
    <property type="match status" value="1"/>
</dbReference>
<dbReference type="PANTHER" id="PTHR30555">
    <property type="entry name" value="HYDROPEROXIDASE I, BIFUNCTIONAL CATALASE-PEROXIDASE"/>
    <property type="match status" value="1"/>
</dbReference>
<dbReference type="Pfam" id="PF00141">
    <property type="entry name" value="peroxidase"/>
    <property type="match status" value="2"/>
</dbReference>
<dbReference type="PRINTS" id="PR00460">
    <property type="entry name" value="BPEROXIDASE"/>
</dbReference>
<dbReference type="PRINTS" id="PR00458">
    <property type="entry name" value="PEROXIDASE"/>
</dbReference>
<dbReference type="SUPFAM" id="SSF48113">
    <property type="entry name" value="Heme-dependent peroxidases"/>
    <property type="match status" value="2"/>
</dbReference>
<dbReference type="PROSITE" id="PS00435">
    <property type="entry name" value="PEROXIDASE_1"/>
    <property type="match status" value="1"/>
</dbReference>
<dbReference type="PROSITE" id="PS00436">
    <property type="entry name" value="PEROXIDASE_2"/>
    <property type="match status" value="1"/>
</dbReference>
<dbReference type="PROSITE" id="PS50873">
    <property type="entry name" value="PEROXIDASE_4"/>
    <property type="match status" value="1"/>
</dbReference>
<evidence type="ECO:0000255" key="1">
    <source>
        <dbReference type="HAMAP-Rule" id="MF_01961"/>
    </source>
</evidence>
<evidence type="ECO:0000305" key="2"/>
<keyword id="KW-0349">Heme</keyword>
<keyword id="KW-0376">Hydrogen peroxide</keyword>
<keyword id="KW-0408">Iron</keyword>
<keyword id="KW-0479">Metal-binding</keyword>
<keyword id="KW-0560">Oxidoreductase</keyword>
<keyword id="KW-0575">Peroxidase</keyword>
<keyword id="KW-1185">Reference proteome</keyword>
<reference key="1">
    <citation type="submission" date="2006-10" db="EMBL/GenBank/DDBJ databases">
        <authorList>
            <person name="Fleischmann R.D."/>
            <person name="Dodson R.J."/>
            <person name="Haft D.H."/>
            <person name="Merkel J.S."/>
            <person name="Nelson W.C."/>
            <person name="Fraser C.M."/>
        </authorList>
    </citation>
    <scope>NUCLEOTIDE SEQUENCE [LARGE SCALE GENOMIC DNA]</scope>
    <source>
        <strain>ATCC 700084 / mc(2)155</strain>
    </source>
</reference>
<reference key="2">
    <citation type="journal article" date="2007" name="Genome Biol.">
        <title>Interrupted coding sequences in Mycobacterium smegmatis: authentic mutations or sequencing errors?</title>
        <authorList>
            <person name="Deshayes C."/>
            <person name="Perrodou E."/>
            <person name="Gallien S."/>
            <person name="Euphrasie D."/>
            <person name="Schaeffer C."/>
            <person name="Van-Dorsselaer A."/>
            <person name="Poch O."/>
            <person name="Lecompte O."/>
            <person name="Reyrat J.-M."/>
        </authorList>
    </citation>
    <scope>NUCLEOTIDE SEQUENCE [LARGE SCALE GENOMIC DNA]</scope>
    <source>
        <strain>ATCC 700084 / mc(2)155</strain>
    </source>
</reference>
<reference key="3">
    <citation type="journal article" date="2009" name="Genome Res.">
        <title>Ortho-proteogenomics: multiple proteomes investigation through orthology and a new MS-based protocol.</title>
        <authorList>
            <person name="Gallien S."/>
            <person name="Perrodou E."/>
            <person name="Carapito C."/>
            <person name="Deshayes C."/>
            <person name="Reyrat J.-M."/>
            <person name="Van Dorsselaer A."/>
            <person name="Poch O."/>
            <person name="Schaeffer C."/>
            <person name="Lecompte O."/>
        </authorList>
    </citation>
    <scope>NUCLEOTIDE SEQUENCE [LARGE SCALE GENOMIC DNA]</scope>
    <source>
        <strain>ATCC 700084 / mc(2)155</strain>
    </source>
</reference>
<protein>
    <recommendedName>
        <fullName evidence="1">Catalase-peroxidase 3</fullName>
        <shortName evidence="1">CP 3</shortName>
        <ecNumber evidence="1">1.11.1.21</ecNumber>
    </recommendedName>
    <alternativeName>
        <fullName evidence="1">Peroxidase/catalase 3</fullName>
    </alternativeName>
</protein>
<gene>
    <name evidence="1" type="primary">katG3</name>
    <name type="synonym">katG</name>
    <name type="ordered locus">MSMEG_3729</name>
    <name type="ordered locus">MSMEI_3640</name>
</gene>
<comment type="function">
    <text evidence="1">Bifunctional enzyme with both catalase and broad-spectrum peroxidase activity.</text>
</comment>
<comment type="catalytic activity">
    <reaction evidence="1">
        <text>H2O2 + AH2 = A + 2 H2O</text>
        <dbReference type="Rhea" id="RHEA:30275"/>
        <dbReference type="ChEBI" id="CHEBI:13193"/>
        <dbReference type="ChEBI" id="CHEBI:15377"/>
        <dbReference type="ChEBI" id="CHEBI:16240"/>
        <dbReference type="ChEBI" id="CHEBI:17499"/>
        <dbReference type="EC" id="1.11.1.21"/>
    </reaction>
</comment>
<comment type="catalytic activity">
    <reaction evidence="1">
        <text>2 H2O2 = O2 + 2 H2O</text>
        <dbReference type="Rhea" id="RHEA:20309"/>
        <dbReference type="ChEBI" id="CHEBI:15377"/>
        <dbReference type="ChEBI" id="CHEBI:15379"/>
        <dbReference type="ChEBI" id="CHEBI:16240"/>
        <dbReference type="EC" id="1.11.1.21"/>
    </reaction>
</comment>
<comment type="cofactor">
    <cofactor evidence="1">
        <name>heme b</name>
        <dbReference type="ChEBI" id="CHEBI:60344"/>
    </cofactor>
    <text evidence="1">Binds 1 heme b (iron(II)-protoporphyrin IX) group per dimer.</text>
</comment>
<comment type="subunit">
    <text evidence="1">Homodimer or homotetramer.</text>
</comment>
<comment type="PTM">
    <text evidence="1">Formation of the three residue Trp-Tyr-Met cross-link is important for the catalase, but not the peroxidase activity of the enzyme.</text>
</comment>
<comment type="similarity">
    <text evidence="1">Belongs to the peroxidase family. Peroxidase/catalase subfamily.</text>
</comment>
<comment type="sequence caution" evidence="2">
    <conflict type="erroneous initiation">
        <sequence resource="EMBL-CDS" id="ABK74103"/>
    </conflict>
    <text>Truncated N-terminus.</text>
</comment>
<comment type="sequence caution" evidence="2">
    <conflict type="erroneous initiation">
        <sequence resource="EMBL-CDS" id="AFP40103"/>
    </conflict>
    <text>Extended N-terminus.</text>
</comment>
<organism>
    <name type="scientific">Mycolicibacterium smegmatis (strain ATCC 700084 / mc(2)155)</name>
    <name type="common">Mycobacterium smegmatis</name>
    <dbReference type="NCBI Taxonomy" id="246196"/>
    <lineage>
        <taxon>Bacteria</taxon>
        <taxon>Bacillati</taxon>
        <taxon>Actinomycetota</taxon>
        <taxon>Actinomycetes</taxon>
        <taxon>Mycobacteriales</taxon>
        <taxon>Mycobacteriaceae</taxon>
        <taxon>Mycolicibacterium</taxon>
    </lineage>
</organism>
<accession>A0QYP1</accession>
<accession>I7FN10</accession>
<feature type="chain" id="PRO_0000354840" description="Catalase-peroxidase 3">
    <location>
        <begin position="1"/>
        <end position="744"/>
    </location>
</feature>
<feature type="active site" description="Proton acceptor" evidence="1">
    <location>
        <position position="107"/>
    </location>
</feature>
<feature type="binding site" description="axial binding residue" evidence="1">
    <location>
        <position position="269"/>
    </location>
    <ligand>
        <name>heme b</name>
        <dbReference type="ChEBI" id="CHEBI:60344"/>
    </ligand>
    <ligandPart>
        <name>Fe</name>
        <dbReference type="ChEBI" id="CHEBI:18248"/>
    </ligandPart>
</feature>
<feature type="site" description="Transition state stabilizer" evidence="1">
    <location>
        <position position="103"/>
    </location>
</feature>
<feature type="cross-link" description="Tryptophyl-tyrosyl-methioninium (Trp-Tyr) (with M-254)" evidence="1">
    <location>
        <begin position="106"/>
        <end position="228"/>
    </location>
</feature>
<feature type="cross-link" description="Tryptophyl-tyrosyl-methioninium (Tyr-Met) (with W-106)" evidence="1">
    <location>
        <begin position="228"/>
        <end position="254"/>
    </location>
</feature>
<sequence>MPESPDAYVNRTYDQTVAVRRSLKRRNSPAASEDGLGWPRRLNLRILAQPCRTSSPLGEDFDYAKEFLSLDLDELARDIDEVLTTSQDWWPADFGHYGPLVLRMAWHFAGTYRIGDGRGGAGAGMLRFAPLNSFPDNRNLDKARRLLWPVKKKYGRKISWSDLMIFAGNRALESMGCRTFGFAGGREDAWEADETYWGPESTWLADERHSGVRDLDQPLAASEMGLIYVDPQGPATLPDPLASARDIRETFRRMGMNDEETVALIAGGHTFGKSHGPTDPSRCLGPEPEGAPLEALGLGWVNSFGTGNGADTVTSGLDGIWTATPTKWDMSFLTTLFAYEWDVALSPAGMWQWVPRNGAGAGTVPDPYDPSRTHAPTMLTTDLALQEDPRYRVIALRFLENPDEFADTFARAWFKLTHIDMGPIQRYLGPLVPTERMIWQDPVPHVDHELADADDVAALKREILGSGLSVSQLVTTAWASASTFRNSDKRGGANGARIRLEPQRSWAVNEPEKLAIVLDRLERIRRRFNDSHRGGKQISAADLIMLGGCAAVEHAAAEAGHPIEVPCRLGRTDAPQEWTDIEWFSALEPTADAFRNYVGEGNRPPPEHLLVDRASQLTLTAPQMTVLLGGLRVLGANHGGSPLGVFTASPGALSNDFFVNLLDVNIEWTPRADTADWTAAYEGRDRRTGEVTWIASRVDLSFASDPVLRAISEVYASADAEEKFVRDFVSAWDKVMNLDLFDRT</sequence>
<proteinExistence type="inferred from homology"/>
<name>KATG3_MYCS2</name>